<accession>C1CJF5</accession>
<evidence type="ECO:0000255" key="1">
    <source>
        <dbReference type="HAMAP-Rule" id="MF_01200"/>
    </source>
</evidence>
<keyword id="KW-0210">Decarboxylase</keyword>
<keyword id="KW-0456">Lyase</keyword>
<keyword id="KW-0665">Pyrimidine biosynthesis</keyword>
<gene>
    <name evidence="1" type="primary">pyrF</name>
    <name type="ordered locus">SPP_0710</name>
</gene>
<proteinExistence type="inferred from homology"/>
<comment type="function">
    <text evidence="1">Catalyzes the decarboxylation of orotidine 5'-monophosphate (OMP) to uridine 5'-monophosphate (UMP).</text>
</comment>
<comment type="catalytic activity">
    <reaction evidence="1">
        <text>orotidine 5'-phosphate + H(+) = UMP + CO2</text>
        <dbReference type="Rhea" id="RHEA:11596"/>
        <dbReference type="ChEBI" id="CHEBI:15378"/>
        <dbReference type="ChEBI" id="CHEBI:16526"/>
        <dbReference type="ChEBI" id="CHEBI:57538"/>
        <dbReference type="ChEBI" id="CHEBI:57865"/>
        <dbReference type="EC" id="4.1.1.23"/>
    </reaction>
</comment>
<comment type="pathway">
    <text evidence="1">Pyrimidine metabolism; UMP biosynthesis via de novo pathway; UMP from orotate: step 2/2.</text>
</comment>
<comment type="subunit">
    <text evidence="1">Homodimer.</text>
</comment>
<comment type="similarity">
    <text evidence="1">Belongs to the OMP decarboxylase family. Type 1 subfamily.</text>
</comment>
<dbReference type="EC" id="4.1.1.23" evidence="1"/>
<dbReference type="EMBL" id="CP000920">
    <property type="protein sequence ID" value="ACO21097.1"/>
    <property type="molecule type" value="Genomic_DNA"/>
</dbReference>
<dbReference type="RefSeq" id="WP_001206717.1">
    <property type="nucleotide sequence ID" value="NC_012467.1"/>
</dbReference>
<dbReference type="SMR" id="C1CJF5"/>
<dbReference type="GeneID" id="45653917"/>
<dbReference type="KEGG" id="spp:SPP_0710"/>
<dbReference type="HOGENOM" id="CLU_067069_1_1_9"/>
<dbReference type="UniPathway" id="UPA00070">
    <property type="reaction ID" value="UER00120"/>
</dbReference>
<dbReference type="GO" id="GO:0005829">
    <property type="term" value="C:cytosol"/>
    <property type="evidence" value="ECO:0007669"/>
    <property type="project" value="TreeGrafter"/>
</dbReference>
<dbReference type="GO" id="GO:0004590">
    <property type="term" value="F:orotidine-5'-phosphate decarboxylase activity"/>
    <property type="evidence" value="ECO:0007669"/>
    <property type="project" value="UniProtKB-UniRule"/>
</dbReference>
<dbReference type="GO" id="GO:0006207">
    <property type="term" value="P:'de novo' pyrimidine nucleobase biosynthetic process"/>
    <property type="evidence" value="ECO:0007669"/>
    <property type="project" value="InterPro"/>
</dbReference>
<dbReference type="GO" id="GO:0044205">
    <property type="term" value="P:'de novo' UMP biosynthetic process"/>
    <property type="evidence" value="ECO:0007669"/>
    <property type="project" value="UniProtKB-UniRule"/>
</dbReference>
<dbReference type="CDD" id="cd04725">
    <property type="entry name" value="OMP_decarboxylase_like"/>
    <property type="match status" value="1"/>
</dbReference>
<dbReference type="FunFam" id="3.20.20.70:FF:000015">
    <property type="entry name" value="Orotidine 5'-phosphate decarboxylase"/>
    <property type="match status" value="1"/>
</dbReference>
<dbReference type="Gene3D" id="3.20.20.70">
    <property type="entry name" value="Aldolase class I"/>
    <property type="match status" value="1"/>
</dbReference>
<dbReference type="HAMAP" id="MF_01200_B">
    <property type="entry name" value="OMPdecase_type1_B"/>
    <property type="match status" value="1"/>
</dbReference>
<dbReference type="InterPro" id="IPR013785">
    <property type="entry name" value="Aldolase_TIM"/>
</dbReference>
<dbReference type="InterPro" id="IPR014732">
    <property type="entry name" value="OMPdecase"/>
</dbReference>
<dbReference type="InterPro" id="IPR018089">
    <property type="entry name" value="OMPdecase_AS"/>
</dbReference>
<dbReference type="InterPro" id="IPR047596">
    <property type="entry name" value="OMPdecase_bac"/>
</dbReference>
<dbReference type="InterPro" id="IPR001754">
    <property type="entry name" value="OMPdeCOase_dom"/>
</dbReference>
<dbReference type="InterPro" id="IPR011060">
    <property type="entry name" value="RibuloseP-bd_barrel"/>
</dbReference>
<dbReference type="NCBIfam" id="NF001273">
    <property type="entry name" value="PRK00230.1"/>
    <property type="match status" value="1"/>
</dbReference>
<dbReference type="NCBIfam" id="TIGR01740">
    <property type="entry name" value="pyrF"/>
    <property type="match status" value="1"/>
</dbReference>
<dbReference type="PANTHER" id="PTHR32119">
    <property type="entry name" value="OROTIDINE 5'-PHOSPHATE DECARBOXYLASE"/>
    <property type="match status" value="1"/>
</dbReference>
<dbReference type="PANTHER" id="PTHR32119:SF2">
    <property type="entry name" value="OROTIDINE 5'-PHOSPHATE DECARBOXYLASE"/>
    <property type="match status" value="1"/>
</dbReference>
<dbReference type="Pfam" id="PF00215">
    <property type="entry name" value="OMPdecase"/>
    <property type="match status" value="1"/>
</dbReference>
<dbReference type="SMART" id="SM00934">
    <property type="entry name" value="OMPdecase"/>
    <property type="match status" value="1"/>
</dbReference>
<dbReference type="SUPFAM" id="SSF51366">
    <property type="entry name" value="Ribulose-phoshate binding barrel"/>
    <property type="match status" value="1"/>
</dbReference>
<dbReference type="PROSITE" id="PS00156">
    <property type="entry name" value="OMPDECASE"/>
    <property type="match status" value="1"/>
</dbReference>
<reference key="1">
    <citation type="journal article" date="2010" name="Genome Biol.">
        <title>Structure and dynamics of the pan-genome of Streptococcus pneumoniae and closely related species.</title>
        <authorList>
            <person name="Donati C."/>
            <person name="Hiller N.L."/>
            <person name="Tettelin H."/>
            <person name="Muzzi A."/>
            <person name="Croucher N.J."/>
            <person name="Angiuoli S.V."/>
            <person name="Oggioni M."/>
            <person name="Dunning Hotopp J.C."/>
            <person name="Hu F.Z."/>
            <person name="Riley D.R."/>
            <person name="Covacci A."/>
            <person name="Mitchell T.J."/>
            <person name="Bentley S.D."/>
            <person name="Kilian M."/>
            <person name="Ehrlich G.D."/>
            <person name="Rappuoli R."/>
            <person name="Moxon E.R."/>
            <person name="Masignani V."/>
        </authorList>
    </citation>
    <scope>NUCLEOTIDE SEQUENCE [LARGE SCALE GENOMIC DNA]</scope>
    <source>
        <strain>P1031</strain>
    </source>
</reference>
<feature type="chain" id="PRO_1000164584" description="Orotidine 5'-phosphate decarboxylase">
    <location>
        <begin position="1"/>
        <end position="233"/>
    </location>
</feature>
<feature type="active site" description="Proton donor" evidence="1">
    <location>
        <position position="63"/>
    </location>
</feature>
<feature type="binding site" evidence="1">
    <location>
        <position position="11"/>
    </location>
    <ligand>
        <name>substrate</name>
    </ligand>
</feature>
<feature type="binding site" evidence="1">
    <location>
        <position position="34"/>
    </location>
    <ligand>
        <name>substrate</name>
    </ligand>
</feature>
<feature type="binding site" evidence="1">
    <location>
        <begin position="61"/>
        <end position="70"/>
    </location>
    <ligand>
        <name>substrate</name>
    </ligand>
</feature>
<feature type="binding site" evidence="1">
    <location>
        <position position="117"/>
    </location>
    <ligand>
        <name>substrate</name>
    </ligand>
</feature>
<feature type="binding site" evidence="1">
    <location>
        <position position="179"/>
    </location>
    <ligand>
        <name>substrate</name>
    </ligand>
</feature>
<feature type="binding site" evidence="1">
    <location>
        <position position="188"/>
    </location>
    <ligand>
        <name>substrate</name>
    </ligand>
</feature>
<feature type="binding site" evidence="1">
    <location>
        <position position="208"/>
    </location>
    <ligand>
        <name>substrate</name>
    </ligand>
</feature>
<feature type="binding site" evidence="1">
    <location>
        <position position="209"/>
    </location>
    <ligand>
        <name>substrate</name>
    </ligand>
</feature>
<organism>
    <name type="scientific">Streptococcus pneumoniae (strain P1031)</name>
    <dbReference type="NCBI Taxonomy" id="488223"/>
    <lineage>
        <taxon>Bacteria</taxon>
        <taxon>Bacillati</taxon>
        <taxon>Bacillota</taxon>
        <taxon>Bacilli</taxon>
        <taxon>Lactobacillales</taxon>
        <taxon>Streptococcaceae</taxon>
        <taxon>Streptococcus</taxon>
    </lineage>
</organism>
<protein>
    <recommendedName>
        <fullName evidence="1">Orotidine 5'-phosphate decarboxylase</fullName>
        <ecNumber evidence="1">4.1.1.23</ecNumber>
    </recommendedName>
    <alternativeName>
        <fullName evidence="1">OMP decarboxylase</fullName>
        <shortName evidence="1">OMPDCase</shortName>
        <shortName evidence="1">OMPdecase</shortName>
    </alternativeName>
</protein>
<sequence length="233" mass="25409">MREHRPIIALDFPSFEAVKEFLALFPAEESLYLKVGMELYYAAGPEIVSYLKGLGHSVFLDLKLHDIPNTVKSAMKVLSQLGVDMTNVHAAGGVEMMKAAREGLGSQAKLIAVTQLTSTSEAQMQEFQNIQTSLQESVIHYAKKTAEAGLDGVVCSAQEVQVIKQATNPDFICLTPGIRPAGVAVGDQKRVMTPADAYQIGSDYIVVGRPITQAEDPVAAYHAIKDEWTQDWN</sequence>
<name>PYRF_STRZP</name>